<protein>
    <recommendedName>
        <fullName>Uncharacterized membrane protein YwcD</fullName>
    </recommendedName>
</protein>
<sequence>MYIIMGVFTTIVNIASFYILVEIMNVDYKAATVAAWILSVLFAYITNKLYVFQQKTHDLQSLLKELTAFFSVRVLSLGIDLGMMIILVGQFNTNETLAKILDNAVIVVVNYVASKWLVFKKTKEEGV</sequence>
<feature type="chain" id="PRO_0000212256" description="Uncharacterized membrane protein YwcD">
    <location>
        <begin position="1"/>
        <end position="127"/>
    </location>
</feature>
<feature type="transmembrane region" description="Helical" evidence="1">
    <location>
        <begin position="1"/>
        <end position="21"/>
    </location>
</feature>
<feature type="transmembrane region" description="Helical" evidence="1">
    <location>
        <begin position="32"/>
        <end position="52"/>
    </location>
</feature>
<feature type="transmembrane region" description="Helical" evidence="1">
    <location>
        <begin position="68"/>
        <end position="88"/>
    </location>
</feature>
<feature type="transmembrane region" description="Helical" evidence="1">
    <location>
        <begin position="100"/>
        <end position="120"/>
    </location>
</feature>
<accession>P39602</accession>
<reference key="1">
    <citation type="journal article" date="1993" name="Mol. Microbiol.">
        <title>Bacillus subtilis genome project: cloning and sequencing of the 97 kb region from 325 degrees to 333 degrees.</title>
        <authorList>
            <person name="Glaser P."/>
            <person name="Kunst F."/>
            <person name="Arnaud M."/>
            <person name="Coudart M.P."/>
            <person name="Gonzales W."/>
            <person name="Hullo M.-F."/>
            <person name="Ionescu M."/>
            <person name="Lubochinsky B."/>
            <person name="Marcelino L."/>
            <person name="Moszer I."/>
            <person name="Presecan E."/>
            <person name="Santana M."/>
            <person name="Schneider E."/>
            <person name="Schweizer J."/>
            <person name="Vertes A."/>
            <person name="Rapoport G."/>
            <person name="Danchin A."/>
        </authorList>
    </citation>
    <scope>NUCLEOTIDE SEQUENCE [GENOMIC DNA]</scope>
    <source>
        <strain>168</strain>
    </source>
</reference>
<reference key="2">
    <citation type="journal article" date="1997" name="Nature">
        <title>The complete genome sequence of the Gram-positive bacterium Bacillus subtilis.</title>
        <authorList>
            <person name="Kunst F."/>
            <person name="Ogasawara N."/>
            <person name="Moszer I."/>
            <person name="Albertini A.M."/>
            <person name="Alloni G."/>
            <person name="Azevedo V."/>
            <person name="Bertero M.G."/>
            <person name="Bessieres P."/>
            <person name="Bolotin A."/>
            <person name="Borchert S."/>
            <person name="Borriss R."/>
            <person name="Boursier L."/>
            <person name="Brans A."/>
            <person name="Braun M."/>
            <person name="Brignell S.C."/>
            <person name="Bron S."/>
            <person name="Brouillet S."/>
            <person name="Bruschi C.V."/>
            <person name="Caldwell B."/>
            <person name="Capuano V."/>
            <person name="Carter N.M."/>
            <person name="Choi S.-K."/>
            <person name="Codani J.-J."/>
            <person name="Connerton I.F."/>
            <person name="Cummings N.J."/>
            <person name="Daniel R.A."/>
            <person name="Denizot F."/>
            <person name="Devine K.M."/>
            <person name="Duesterhoeft A."/>
            <person name="Ehrlich S.D."/>
            <person name="Emmerson P.T."/>
            <person name="Entian K.-D."/>
            <person name="Errington J."/>
            <person name="Fabret C."/>
            <person name="Ferrari E."/>
            <person name="Foulger D."/>
            <person name="Fritz C."/>
            <person name="Fujita M."/>
            <person name="Fujita Y."/>
            <person name="Fuma S."/>
            <person name="Galizzi A."/>
            <person name="Galleron N."/>
            <person name="Ghim S.-Y."/>
            <person name="Glaser P."/>
            <person name="Goffeau A."/>
            <person name="Golightly E.J."/>
            <person name="Grandi G."/>
            <person name="Guiseppi G."/>
            <person name="Guy B.J."/>
            <person name="Haga K."/>
            <person name="Haiech J."/>
            <person name="Harwood C.R."/>
            <person name="Henaut A."/>
            <person name="Hilbert H."/>
            <person name="Holsappel S."/>
            <person name="Hosono S."/>
            <person name="Hullo M.-F."/>
            <person name="Itaya M."/>
            <person name="Jones L.-M."/>
            <person name="Joris B."/>
            <person name="Karamata D."/>
            <person name="Kasahara Y."/>
            <person name="Klaerr-Blanchard M."/>
            <person name="Klein C."/>
            <person name="Kobayashi Y."/>
            <person name="Koetter P."/>
            <person name="Koningstein G."/>
            <person name="Krogh S."/>
            <person name="Kumano M."/>
            <person name="Kurita K."/>
            <person name="Lapidus A."/>
            <person name="Lardinois S."/>
            <person name="Lauber J."/>
            <person name="Lazarevic V."/>
            <person name="Lee S.-M."/>
            <person name="Levine A."/>
            <person name="Liu H."/>
            <person name="Masuda S."/>
            <person name="Mauel C."/>
            <person name="Medigue C."/>
            <person name="Medina N."/>
            <person name="Mellado R.P."/>
            <person name="Mizuno M."/>
            <person name="Moestl D."/>
            <person name="Nakai S."/>
            <person name="Noback M."/>
            <person name="Noone D."/>
            <person name="O'Reilly M."/>
            <person name="Ogawa K."/>
            <person name="Ogiwara A."/>
            <person name="Oudega B."/>
            <person name="Park S.-H."/>
            <person name="Parro V."/>
            <person name="Pohl T.M."/>
            <person name="Portetelle D."/>
            <person name="Porwollik S."/>
            <person name="Prescott A.M."/>
            <person name="Presecan E."/>
            <person name="Pujic P."/>
            <person name="Purnelle B."/>
            <person name="Rapoport G."/>
            <person name="Rey M."/>
            <person name="Reynolds S."/>
            <person name="Rieger M."/>
            <person name="Rivolta C."/>
            <person name="Rocha E."/>
            <person name="Roche B."/>
            <person name="Rose M."/>
            <person name="Sadaie Y."/>
            <person name="Sato T."/>
            <person name="Scanlan E."/>
            <person name="Schleich S."/>
            <person name="Schroeter R."/>
            <person name="Scoffone F."/>
            <person name="Sekiguchi J."/>
            <person name="Sekowska A."/>
            <person name="Seror S.J."/>
            <person name="Serror P."/>
            <person name="Shin B.-S."/>
            <person name="Soldo B."/>
            <person name="Sorokin A."/>
            <person name="Tacconi E."/>
            <person name="Takagi T."/>
            <person name="Takahashi H."/>
            <person name="Takemaru K."/>
            <person name="Takeuchi M."/>
            <person name="Tamakoshi A."/>
            <person name="Tanaka T."/>
            <person name="Terpstra P."/>
            <person name="Tognoni A."/>
            <person name="Tosato V."/>
            <person name="Uchiyama S."/>
            <person name="Vandenbol M."/>
            <person name="Vannier F."/>
            <person name="Vassarotti A."/>
            <person name="Viari A."/>
            <person name="Wambutt R."/>
            <person name="Wedler E."/>
            <person name="Wedler H."/>
            <person name="Weitzenegger T."/>
            <person name="Winters P."/>
            <person name="Wipat A."/>
            <person name="Yamamoto H."/>
            <person name="Yamane K."/>
            <person name="Yasumoto K."/>
            <person name="Yata K."/>
            <person name="Yoshida K."/>
            <person name="Yoshikawa H.-F."/>
            <person name="Zumstein E."/>
            <person name="Yoshikawa H."/>
            <person name="Danchin A."/>
        </authorList>
    </citation>
    <scope>NUCLEOTIDE SEQUENCE [LARGE SCALE GENOMIC DNA]</scope>
    <source>
        <strain>168</strain>
    </source>
</reference>
<evidence type="ECO:0000255" key="1"/>
<evidence type="ECO:0000305" key="2"/>
<name>YWCD_BACSU</name>
<comment type="subcellular location">
    <subcellularLocation>
        <location evidence="2">Cell membrane</location>
        <topology evidence="2">Multi-pass membrane protein</topology>
    </subcellularLocation>
</comment>
<comment type="similarity">
    <text evidence="2">Belongs to the GtrA family.</text>
</comment>
<organism>
    <name type="scientific">Bacillus subtilis (strain 168)</name>
    <dbReference type="NCBI Taxonomy" id="224308"/>
    <lineage>
        <taxon>Bacteria</taxon>
        <taxon>Bacillati</taxon>
        <taxon>Bacillota</taxon>
        <taxon>Bacilli</taxon>
        <taxon>Bacillales</taxon>
        <taxon>Bacillaceae</taxon>
        <taxon>Bacillus</taxon>
    </lineage>
</organism>
<proteinExistence type="inferred from homology"/>
<gene>
    <name type="primary">ywcD</name>
    <name type="ordered locus">BSU38210</name>
    <name type="ORF">ipa-34d</name>
</gene>
<dbReference type="EMBL" id="X73124">
    <property type="protein sequence ID" value="CAA51590.1"/>
    <property type="molecule type" value="Genomic_DNA"/>
</dbReference>
<dbReference type="EMBL" id="AL009126">
    <property type="protein sequence ID" value="CAB15847.1"/>
    <property type="molecule type" value="Genomic_DNA"/>
</dbReference>
<dbReference type="PIR" id="S39689">
    <property type="entry name" value="S39689"/>
</dbReference>
<dbReference type="RefSeq" id="NP_391700.1">
    <property type="nucleotide sequence ID" value="NC_000964.3"/>
</dbReference>
<dbReference type="RefSeq" id="WP_003227398.1">
    <property type="nucleotide sequence ID" value="NZ_OZ025638.1"/>
</dbReference>
<dbReference type="SMR" id="P39602"/>
<dbReference type="FunCoup" id="P39602">
    <property type="interactions" value="48"/>
</dbReference>
<dbReference type="STRING" id="224308.BSU38210"/>
<dbReference type="PaxDb" id="224308-BSU38210"/>
<dbReference type="EnsemblBacteria" id="CAB15847">
    <property type="protein sequence ID" value="CAB15847"/>
    <property type="gene ID" value="BSU_38210"/>
</dbReference>
<dbReference type="GeneID" id="937313"/>
<dbReference type="KEGG" id="bsu:BSU38210"/>
<dbReference type="PATRIC" id="fig|224308.179.peg.4136"/>
<dbReference type="eggNOG" id="COG2246">
    <property type="taxonomic scope" value="Bacteria"/>
</dbReference>
<dbReference type="InParanoid" id="P39602"/>
<dbReference type="OrthoDB" id="361483at2"/>
<dbReference type="PhylomeDB" id="P39602"/>
<dbReference type="BioCyc" id="BSUB:BSU38210-MONOMER"/>
<dbReference type="Proteomes" id="UP000001570">
    <property type="component" value="Chromosome"/>
</dbReference>
<dbReference type="GO" id="GO:0005886">
    <property type="term" value="C:plasma membrane"/>
    <property type="evidence" value="ECO:0000318"/>
    <property type="project" value="GO_Central"/>
</dbReference>
<dbReference type="GO" id="GO:0000271">
    <property type="term" value="P:polysaccharide biosynthetic process"/>
    <property type="evidence" value="ECO:0007669"/>
    <property type="project" value="InterPro"/>
</dbReference>
<dbReference type="InterPro" id="IPR051401">
    <property type="entry name" value="GtrA_CellWall_Glycosyl"/>
</dbReference>
<dbReference type="InterPro" id="IPR007267">
    <property type="entry name" value="GtrA_DPMS_TM"/>
</dbReference>
<dbReference type="PANTHER" id="PTHR38459:SF5">
    <property type="entry name" value="CELL WALL TEICHOIC ACID GLYCOSYLATION PROTEIN GTCA"/>
    <property type="match status" value="1"/>
</dbReference>
<dbReference type="PANTHER" id="PTHR38459">
    <property type="entry name" value="PROPHAGE BACTOPRENOL-LINKED GLUCOSE TRANSLOCASE HOMOLOG"/>
    <property type="match status" value="1"/>
</dbReference>
<dbReference type="Pfam" id="PF04138">
    <property type="entry name" value="GtrA_DPMS_TM"/>
    <property type="match status" value="1"/>
</dbReference>
<keyword id="KW-1003">Cell membrane</keyword>
<keyword id="KW-0472">Membrane</keyword>
<keyword id="KW-1185">Reference proteome</keyword>
<keyword id="KW-0812">Transmembrane</keyword>
<keyword id="KW-1133">Transmembrane helix</keyword>